<accession>O34325</accession>
<accession>Q795T6</accession>
<evidence type="ECO:0000255" key="1">
    <source>
        <dbReference type="PROSITE-ProRule" id="PRU00095"/>
    </source>
</evidence>
<protein>
    <recommendedName>
        <fullName>Uncharacterized protein YtrP</fullName>
    </recommendedName>
</protein>
<dbReference type="EMBL" id="AF008220">
    <property type="protein sequence ID" value="AAC00304.1"/>
    <property type="molecule type" value="Genomic_DNA"/>
</dbReference>
<dbReference type="EMBL" id="AL009126">
    <property type="protein sequence ID" value="CAB14943.1"/>
    <property type="molecule type" value="Genomic_DNA"/>
</dbReference>
<dbReference type="PIR" id="F70000">
    <property type="entry name" value="F70000"/>
</dbReference>
<dbReference type="RefSeq" id="WP_003229309.1">
    <property type="nucleotide sequence ID" value="NZ_OZ025638.1"/>
</dbReference>
<dbReference type="SMR" id="O34325"/>
<dbReference type="FunCoup" id="O34325">
    <property type="interactions" value="5"/>
</dbReference>
<dbReference type="STRING" id="224308.BSU29650"/>
<dbReference type="PaxDb" id="224308-BSU29650"/>
<dbReference type="DNASU" id="936255"/>
<dbReference type="EnsemblBacteria" id="CAB14943">
    <property type="protein sequence ID" value="CAB14943"/>
    <property type="gene ID" value="BSU_29650"/>
</dbReference>
<dbReference type="GeneID" id="936255"/>
<dbReference type="KEGG" id="bsu:BSU29650"/>
<dbReference type="PATRIC" id="fig|224308.179.peg.3221"/>
<dbReference type="eggNOG" id="COG2199">
    <property type="taxonomic scope" value="Bacteria"/>
</dbReference>
<dbReference type="eggNOG" id="COG2203">
    <property type="taxonomic scope" value="Bacteria"/>
</dbReference>
<dbReference type="InParanoid" id="O34325"/>
<dbReference type="OrthoDB" id="9759607at2"/>
<dbReference type="BioCyc" id="BSUB:BSU29650-MONOMER"/>
<dbReference type="Proteomes" id="UP000001570">
    <property type="component" value="Chromosome"/>
</dbReference>
<dbReference type="GO" id="GO:0005886">
    <property type="term" value="C:plasma membrane"/>
    <property type="evidence" value="ECO:0000318"/>
    <property type="project" value="GO_Central"/>
</dbReference>
<dbReference type="GO" id="GO:0052621">
    <property type="term" value="F:diguanylate cyclase activity"/>
    <property type="evidence" value="ECO:0000318"/>
    <property type="project" value="GO_Central"/>
</dbReference>
<dbReference type="GO" id="GO:0043709">
    <property type="term" value="P:cell adhesion involved in single-species biofilm formation"/>
    <property type="evidence" value="ECO:0000318"/>
    <property type="project" value="GO_Central"/>
</dbReference>
<dbReference type="GO" id="GO:1902201">
    <property type="term" value="P:negative regulation of bacterial-type flagellum-dependent cell motility"/>
    <property type="evidence" value="ECO:0000318"/>
    <property type="project" value="GO_Central"/>
</dbReference>
<dbReference type="CDD" id="cd01949">
    <property type="entry name" value="GGDEF"/>
    <property type="match status" value="1"/>
</dbReference>
<dbReference type="FunFam" id="3.30.70.270:FF:000001">
    <property type="entry name" value="Diguanylate cyclase domain protein"/>
    <property type="match status" value="1"/>
</dbReference>
<dbReference type="Gene3D" id="3.30.450.40">
    <property type="match status" value="2"/>
</dbReference>
<dbReference type="Gene3D" id="3.30.70.270">
    <property type="match status" value="1"/>
</dbReference>
<dbReference type="InterPro" id="IPR050469">
    <property type="entry name" value="Diguanylate_Cyclase"/>
</dbReference>
<dbReference type="InterPro" id="IPR029016">
    <property type="entry name" value="GAF-like_dom_sf"/>
</dbReference>
<dbReference type="InterPro" id="IPR000160">
    <property type="entry name" value="GGDEF_dom"/>
</dbReference>
<dbReference type="InterPro" id="IPR029787">
    <property type="entry name" value="Nucleotide_cyclase"/>
</dbReference>
<dbReference type="InterPro" id="IPR043128">
    <property type="entry name" value="Rev_trsase/Diguanyl_cyclase"/>
</dbReference>
<dbReference type="NCBIfam" id="TIGR00254">
    <property type="entry name" value="GGDEF"/>
    <property type="match status" value="1"/>
</dbReference>
<dbReference type="PANTHER" id="PTHR45138:SF9">
    <property type="entry name" value="DIGUANYLATE CYCLASE DGCM-RELATED"/>
    <property type="match status" value="1"/>
</dbReference>
<dbReference type="PANTHER" id="PTHR45138">
    <property type="entry name" value="REGULATORY COMPONENTS OF SENSORY TRANSDUCTION SYSTEM"/>
    <property type="match status" value="1"/>
</dbReference>
<dbReference type="Pfam" id="PF00990">
    <property type="entry name" value="GGDEF"/>
    <property type="match status" value="1"/>
</dbReference>
<dbReference type="SMART" id="SM00267">
    <property type="entry name" value="GGDEF"/>
    <property type="match status" value="1"/>
</dbReference>
<dbReference type="SUPFAM" id="SSF55781">
    <property type="entry name" value="GAF domain-like"/>
    <property type="match status" value="2"/>
</dbReference>
<dbReference type="SUPFAM" id="SSF55073">
    <property type="entry name" value="Nucleotide cyclase"/>
    <property type="match status" value="1"/>
</dbReference>
<dbReference type="PROSITE" id="PS50887">
    <property type="entry name" value="GGDEF"/>
    <property type="match status" value="1"/>
</dbReference>
<organism>
    <name type="scientific">Bacillus subtilis (strain 168)</name>
    <dbReference type="NCBI Taxonomy" id="224308"/>
    <lineage>
        <taxon>Bacteria</taxon>
        <taxon>Bacillati</taxon>
        <taxon>Bacillota</taxon>
        <taxon>Bacilli</taxon>
        <taxon>Bacillales</taxon>
        <taxon>Bacillaceae</taxon>
        <taxon>Bacillus</taxon>
    </lineage>
</organism>
<name>YTRP_BACSU</name>
<gene>
    <name type="primary">ytrP</name>
    <name type="ordered locus">BSU29650</name>
</gene>
<reference key="1">
    <citation type="journal article" date="1990" name="J. Bacteriol.">
        <title>Cloning and analysis of the Bacillus subtilis rpsD gene, encoding ribosomal protein S4.</title>
        <authorList>
            <person name="Grundy F.J."/>
            <person name="Henkin T.M."/>
        </authorList>
    </citation>
    <scope>NUCLEOTIDE SEQUENCE [GENOMIC DNA]</scope>
    <source>
        <strain>168</strain>
    </source>
</reference>
<reference key="2">
    <citation type="journal article" date="1997" name="Microbiology">
        <title>Sequencing and functional annotation of the Bacillus subtilis genes in the 200 kb rrnB-dnaB region.</title>
        <authorList>
            <person name="Lapidus A."/>
            <person name="Galleron N."/>
            <person name="Sorokin A."/>
            <person name="Ehrlich S.D."/>
        </authorList>
    </citation>
    <scope>NUCLEOTIDE SEQUENCE [GENOMIC DNA]</scope>
    <source>
        <strain>168</strain>
    </source>
</reference>
<reference key="3">
    <citation type="journal article" date="1997" name="Nature">
        <title>The complete genome sequence of the Gram-positive bacterium Bacillus subtilis.</title>
        <authorList>
            <person name="Kunst F."/>
            <person name="Ogasawara N."/>
            <person name="Moszer I."/>
            <person name="Albertini A.M."/>
            <person name="Alloni G."/>
            <person name="Azevedo V."/>
            <person name="Bertero M.G."/>
            <person name="Bessieres P."/>
            <person name="Bolotin A."/>
            <person name="Borchert S."/>
            <person name="Borriss R."/>
            <person name="Boursier L."/>
            <person name="Brans A."/>
            <person name="Braun M."/>
            <person name="Brignell S.C."/>
            <person name="Bron S."/>
            <person name="Brouillet S."/>
            <person name="Bruschi C.V."/>
            <person name="Caldwell B."/>
            <person name="Capuano V."/>
            <person name="Carter N.M."/>
            <person name="Choi S.-K."/>
            <person name="Codani J.-J."/>
            <person name="Connerton I.F."/>
            <person name="Cummings N.J."/>
            <person name="Daniel R.A."/>
            <person name="Denizot F."/>
            <person name="Devine K.M."/>
            <person name="Duesterhoeft A."/>
            <person name="Ehrlich S.D."/>
            <person name="Emmerson P.T."/>
            <person name="Entian K.-D."/>
            <person name="Errington J."/>
            <person name="Fabret C."/>
            <person name="Ferrari E."/>
            <person name="Foulger D."/>
            <person name="Fritz C."/>
            <person name="Fujita M."/>
            <person name="Fujita Y."/>
            <person name="Fuma S."/>
            <person name="Galizzi A."/>
            <person name="Galleron N."/>
            <person name="Ghim S.-Y."/>
            <person name="Glaser P."/>
            <person name="Goffeau A."/>
            <person name="Golightly E.J."/>
            <person name="Grandi G."/>
            <person name="Guiseppi G."/>
            <person name="Guy B.J."/>
            <person name="Haga K."/>
            <person name="Haiech J."/>
            <person name="Harwood C.R."/>
            <person name="Henaut A."/>
            <person name="Hilbert H."/>
            <person name="Holsappel S."/>
            <person name="Hosono S."/>
            <person name="Hullo M.-F."/>
            <person name="Itaya M."/>
            <person name="Jones L.-M."/>
            <person name="Joris B."/>
            <person name="Karamata D."/>
            <person name="Kasahara Y."/>
            <person name="Klaerr-Blanchard M."/>
            <person name="Klein C."/>
            <person name="Kobayashi Y."/>
            <person name="Koetter P."/>
            <person name="Koningstein G."/>
            <person name="Krogh S."/>
            <person name="Kumano M."/>
            <person name="Kurita K."/>
            <person name="Lapidus A."/>
            <person name="Lardinois S."/>
            <person name="Lauber J."/>
            <person name="Lazarevic V."/>
            <person name="Lee S.-M."/>
            <person name="Levine A."/>
            <person name="Liu H."/>
            <person name="Masuda S."/>
            <person name="Mauel C."/>
            <person name="Medigue C."/>
            <person name="Medina N."/>
            <person name="Mellado R.P."/>
            <person name="Mizuno M."/>
            <person name="Moestl D."/>
            <person name="Nakai S."/>
            <person name="Noback M."/>
            <person name="Noone D."/>
            <person name="O'Reilly M."/>
            <person name="Ogawa K."/>
            <person name="Ogiwara A."/>
            <person name="Oudega B."/>
            <person name="Park S.-H."/>
            <person name="Parro V."/>
            <person name="Pohl T.M."/>
            <person name="Portetelle D."/>
            <person name="Porwollik S."/>
            <person name="Prescott A.M."/>
            <person name="Presecan E."/>
            <person name="Pujic P."/>
            <person name="Purnelle B."/>
            <person name="Rapoport G."/>
            <person name="Rey M."/>
            <person name="Reynolds S."/>
            <person name="Rieger M."/>
            <person name="Rivolta C."/>
            <person name="Rocha E."/>
            <person name="Roche B."/>
            <person name="Rose M."/>
            <person name="Sadaie Y."/>
            <person name="Sato T."/>
            <person name="Scanlan E."/>
            <person name="Schleich S."/>
            <person name="Schroeter R."/>
            <person name="Scoffone F."/>
            <person name="Sekiguchi J."/>
            <person name="Sekowska A."/>
            <person name="Seror S.J."/>
            <person name="Serror P."/>
            <person name="Shin B.-S."/>
            <person name="Soldo B."/>
            <person name="Sorokin A."/>
            <person name="Tacconi E."/>
            <person name="Takagi T."/>
            <person name="Takahashi H."/>
            <person name="Takemaru K."/>
            <person name="Takeuchi M."/>
            <person name="Tamakoshi A."/>
            <person name="Tanaka T."/>
            <person name="Terpstra P."/>
            <person name="Tognoni A."/>
            <person name="Tosato V."/>
            <person name="Uchiyama S."/>
            <person name="Vandenbol M."/>
            <person name="Vannier F."/>
            <person name="Vassarotti A."/>
            <person name="Viari A."/>
            <person name="Wambutt R."/>
            <person name="Wedler E."/>
            <person name="Wedler H."/>
            <person name="Weitzenegger T."/>
            <person name="Winters P."/>
            <person name="Wipat A."/>
            <person name="Yamamoto H."/>
            <person name="Yamane K."/>
            <person name="Yasumoto K."/>
            <person name="Yata K."/>
            <person name="Yoshida K."/>
            <person name="Yoshikawa H.-F."/>
            <person name="Zumstein E."/>
            <person name="Yoshikawa H."/>
            <person name="Danchin A."/>
        </authorList>
    </citation>
    <scope>NUCLEOTIDE SEQUENCE [LARGE SCALE GENOMIC DNA]</scope>
    <source>
        <strain>168</strain>
    </source>
</reference>
<feature type="chain" id="PRO_0000386535" description="Uncharacterized protein YtrP">
    <location>
        <begin position="1"/>
        <end position="579"/>
    </location>
</feature>
<feature type="domain" description="GGDEF" evidence="1">
    <location>
        <begin position="449"/>
        <end position="577"/>
    </location>
</feature>
<sequence>MVEQTKDQLSAFHYHMLDFLLTKSEKVTFTDSFIWLTSAIQTYFSTLCVSLTPSPSDFVTKLADGEARFSASKINASCYLIEDGSGRRFHLACRQDEEIPEGLPDVVASFLNQSMKQERLYNKTIYQKKIYKMTELFHSLLDQTDVLKQLLESLTSTFSLFEFSLFISHDQDQCLGIPAKELYMEGEKSDSFALKVYLSGDILRKNESVAYIPIKGQQGTYGVLKAEGTGDSFLTDACLDEMSLLANAAGKAFENAQLYEQSKASIANLELINETSRRLNQRLTLTDTMNDLAVRMAESFQAEEVGFFHIDHFENLTLLPGSTAFFKEAKPSDFYNELKEKLYEGEKGVFIGNGQSVFGKAGYGSLMAAPMIQNDRLLGFAVLLKQELYAFTFEMYKLFQALIHHATLAVTNSMLRDRLEHLVKTDQLTELYSRAYLDEKIQYSMKIHQKGVFILVDIDNFKNVNDTYGHQTGDEILIQVASVIKSNIRKHDVGARWGGEELAIYLPNVPVAVGKRITERLVYAVRKNTKPEVTISCGISCWTTETKKSLKELVHEADEALYSAKRSGKNRLMIHDSIK</sequence>
<keyword id="KW-1185">Reference proteome</keyword>
<proteinExistence type="predicted"/>